<sequence length="873" mass="96281">MGTSARRALWLLLALCWALRESGATATGRKTKCEASQFQCTNGRCITQLWKCDGDEDCVDGSDEKNCVKKTCAESDFVCNNGQCIPNRWQCDGDPDCEDGSDESPEQCHMRTCRINEISCGARSTQCIPVSWRCDGESDCDSGEDEENCGNVTCSSDEFTCSSGRCISRNFVCNGQDDCSDGSDELDCAPPTCGAHEFQCSTSSCIPISWVCDDDADCSDQSDESLEQCGRQPVIHTKCPASEIQCGSGECIHKKWRCDGDPDCKDGSDEVNCPSRTCRPDQFECEDGSCIHGSRQCNGIRDCVDGSDEVNCKNVNQCLGPGKFKCRSGECIDISKVCNQEQDCRDWSDEPLKECHVNECLVNNGGCSHICKDSVIGYECDCAAGFELIDRKTCGDIDECQNPGICSQICINLKGGYKCECSRGYQMDLATGVCKAVGKEPSLIFTNRRDIRKIGLERKEYIQLVEQLRNTVALDADIAAQKLFWADVSQKAIFSASIDDKVGRHVKMIDNVYNPAAIAVDWVYKTIYWTDAASRTISVATLDGAKRKFLFNSDLREPASIAVDPLSGFVYWSDWGEPAKIEKAGMNGFDRRPLVTVDIQWPNGITLDLIKSRLYWLDSKLHMLSSVDLNGQDRRIVLKSLEFLAHPLALTIFEDRVYWIDGENEAVYGANKFTGSELATLVNNLNDAQDIIVYHELVQPSGKNWCEEDMENGGCEYLCLPAPQINEHSPKYTCSCPNGYHLEENGRECQSTATTVTYSETKDTNTTEISPTSGLVPGEINVTTAVSEVSVPPKGTSAAWAILPLLLLAMAAVGGYLMWRNWQHKNMKSMNFDNPVYLKTTEEDLSIDIGRHSASVGHTYPAISVVSTDDDLA</sequence>
<organism>
    <name type="scientific">Oryctolagus cuniculus</name>
    <name type="common">Rabbit</name>
    <dbReference type="NCBI Taxonomy" id="9986"/>
    <lineage>
        <taxon>Eukaryota</taxon>
        <taxon>Metazoa</taxon>
        <taxon>Chordata</taxon>
        <taxon>Craniata</taxon>
        <taxon>Vertebrata</taxon>
        <taxon>Euteleostomi</taxon>
        <taxon>Mammalia</taxon>
        <taxon>Eutheria</taxon>
        <taxon>Euarchontoglires</taxon>
        <taxon>Glires</taxon>
        <taxon>Lagomorpha</taxon>
        <taxon>Leporidae</taxon>
        <taxon>Oryctolagus</taxon>
    </lineage>
</organism>
<gene>
    <name type="primary">VLDLR</name>
</gene>
<feature type="signal peptide" evidence="4">
    <location>
        <begin position="1"/>
        <end position="27"/>
    </location>
</feature>
<feature type="chain" id="PRO_0000017345" description="Very low-density lipoprotein receptor">
    <location>
        <begin position="28"/>
        <end position="873"/>
    </location>
</feature>
<feature type="topological domain" description="Extracellular" evidence="4">
    <location>
        <begin position="28"/>
        <end position="797"/>
    </location>
</feature>
<feature type="transmembrane region" description="Helical" evidence="4">
    <location>
        <begin position="798"/>
        <end position="819"/>
    </location>
</feature>
<feature type="topological domain" description="Cytoplasmic" evidence="4">
    <location>
        <begin position="820"/>
        <end position="873"/>
    </location>
</feature>
<feature type="domain" description="LDL-receptor class A 1" evidence="6">
    <location>
        <begin position="31"/>
        <end position="69"/>
    </location>
</feature>
<feature type="domain" description="LDL-receptor class A 2" evidence="6">
    <location>
        <begin position="70"/>
        <end position="110"/>
    </location>
</feature>
<feature type="domain" description="LDL-receptor class A 3" evidence="6">
    <location>
        <begin position="111"/>
        <end position="151"/>
    </location>
</feature>
<feature type="domain" description="LDL-receptor class A 4" evidence="6">
    <location>
        <begin position="152"/>
        <end position="190"/>
    </location>
</feature>
<feature type="domain" description="LDL-receptor class A 5" evidence="6">
    <location>
        <begin position="191"/>
        <end position="231"/>
    </location>
</feature>
<feature type="domain" description="LDL-receptor class A 6" evidence="6">
    <location>
        <begin position="237"/>
        <end position="275"/>
    </location>
</feature>
<feature type="domain" description="LDL-receptor class A 7" evidence="6">
    <location>
        <begin position="276"/>
        <end position="314"/>
    </location>
</feature>
<feature type="domain" description="LDL-receptor class A 8" evidence="6">
    <location>
        <begin position="316"/>
        <end position="355"/>
    </location>
</feature>
<feature type="domain" description="EGF-like 1" evidence="5">
    <location>
        <begin position="356"/>
        <end position="395"/>
    </location>
</feature>
<feature type="domain" description="EGF-like 2; calcium-binding" evidence="5">
    <location>
        <begin position="396"/>
        <end position="435"/>
    </location>
</feature>
<feature type="repeat" description="LDL-receptor class B 1">
    <location>
        <begin position="439"/>
        <end position="480"/>
    </location>
</feature>
<feature type="repeat" description="LDL-receptor class B 2">
    <location>
        <begin position="481"/>
        <end position="524"/>
    </location>
</feature>
<feature type="repeat" description="LDL-receptor class B 3">
    <location>
        <begin position="525"/>
        <end position="567"/>
    </location>
</feature>
<feature type="repeat" description="LDL-receptor class B 4">
    <location>
        <begin position="568"/>
        <end position="611"/>
    </location>
</feature>
<feature type="repeat" description="LDL-receptor class B 5">
    <location>
        <begin position="612"/>
        <end position="654"/>
    </location>
</feature>
<feature type="repeat" description="LDL-receptor class B 6">
    <location>
        <begin position="655"/>
        <end position="697"/>
    </location>
</feature>
<feature type="domain" description="EGF-like 3" evidence="5">
    <location>
        <begin position="702"/>
        <end position="750"/>
    </location>
</feature>
<feature type="region of interest" description="Clustered O-linked oligosaccharides">
    <location>
        <begin position="751"/>
        <end position="790"/>
    </location>
</feature>
<feature type="short sequence motif" description="Endocytosis signal" evidence="4">
    <location>
        <begin position="832"/>
        <end position="837"/>
    </location>
</feature>
<feature type="glycosylation site" description="N-linked (GlcNAc...) asparagine" evidence="4">
    <location>
        <position position="151"/>
    </location>
</feature>
<feature type="glycosylation site" description="N-linked (GlcNAc...) asparagine" evidence="4">
    <location>
        <position position="765"/>
    </location>
</feature>
<feature type="glycosylation site" description="N-linked (GlcNAc...) asparagine" evidence="4">
    <location>
        <position position="781"/>
    </location>
</feature>
<feature type="disulfide bond" evidence="1">
    <location>
        <begin position="33"/>
        <end position="45"/>
    </location>
</feature>
<feature type="disulfide bond" evidence="1">
    <location>
        <begin position="40"/>
        <end position="58"/>
    </location>
</feature>
<feature type="disulfide bond" evidence="1">
    <location>
        <begin position="52"/>
        <end position="67"/>
    </location>
</feature>
<feature type="disulfide bond" evidence="1">
    <location>
        <begin position="72"/>
        <end position="84"/>
    </location>
</feature>
<feature type="disulfide bond" evidence="1">
    <location>
        <begin position="79"/>
        <end position="97"/>
    </location>
</feature>
<feature type="disulfide bond" evidence="1">
    <location>
        <begin position="91"/>
        <end position="108"/>
    </location>
</feature>
<feature type="disulfide bond" evidence="1">
    <location>
        <begin position="113"/>
        <end position="127"/>
    </location>
</feature>
<feature type="disulfide bond" evidence="1">
    <location>
        <begin position="120"/>
        <end position="140"/>
    </location>
</feature>
<feature type="disulfide bond" evidence="1">
    <location>
        <begin position="134"/>
        <end position="149"/>
    </location>
</feature>
<feature type="disulfide bond" evidence="1">
    <location>
        <begin position="154"/>
        <end position="166"/>
    </location>
</feature>
<feature type="disulfide bond" evidence="1">
    <location>
        <begin position="161"/>
        <end position="179"/>
    </location>
</feature>
<feature type="disulfide bond" evidence="1">
    <location>
        <begin position="173"/>
        <end position="188"/>
    </location>
</feature>
<feature type="disulfide bond" evidence="1">
    <location>
        <begin position="193"/>
        <end position="205"/>
    </location>
</feature>
<feature type="disulfide bond" evidence="1">
    <location>
        <begin position="200"/>
        <end position="218"/>
    </location>
</feature>
<feature type="disulfide bond" evidence="1">
    <location>
        <begin position="212"/>
        <end position="229"/>
    </location>
</feature>
<feature type="disulfide bond" evidence="1">
    <location>
        <begin position="239"/>
        <end position="251"/>
    </location>
</feature>
<feature type="disulfide bond" evidence="1">
    <location>
        <begin position="246"/>
        <end position="264"/>
    </location>
</feature>
<feature type="disulfide bond" evidence="1">
    <location>
        <begin position="258"/>
        <end position="273"/>
    </location>
</feature>
<feature type="disulfide bond" evidence="1">
    <location>
        <begin position="278"/>
        <end position="290"/>
    </location>
</feature>
<feature type="disulfide bond" evidence="1">
    <location>
        <begin position="285"/>
        <end position="303"/>
    </location>
</feature>
<feature type="disulfide bond" evidence="1">
    <location>
        <begin position="297"/>
        <end position="312"/>
    </location>
</feature>
<feature type="disulfide bond" evidence="1">
    <location>
        <begin position="318"/>
        <end position="331"/>
    </location>
</feature>
<feature type="disulfide bond" evidence="1">
    <location>
        <begin position="326"/>
        <end position="344"/>
    </location>
</feature>
<feature type="disulfide bond" evidence="1">
    <location>
        <begin position="338"/>
        <end position="355"/>
    </location>
</feature>
<feature type="disulfide bond" evidence="1">
    <location>
        <begin position="360"/>
        <end position="371"/>
    </location>
</feature>
<feature type="disulfide bond" evidence="1">
    <location>
        <begin position="367"/>
        <end position="380"/>
    </location>
</feature>
<feature type="disulfide bond" evidence="1">
    <location>
        <begin position="382"/>
        <end position="394"/>
    </location>
</feature>
<feature type="disulfide bond" evidence="1">
    <location>
        <begin position="400"/>
        <end position="410"/>
    </location>
</feature>
<feature type="disulfide bond" evidence="1">
    <location>
        <begin position="406"/>
        <end position="419"/>
    </location>
</feature>
<feature type="disulfide bond" evidence="1">
    <location>
        <begin position="421"/>
        <end position="434"/>
    </location>
</feature>
<feature type="disulfide bond" evidence="1">
    <location>
        <begin position="706"/>
        <end position="719"/>
    </location>
</feature>
<feature type="disulfide bond" evidence="1">
    <location>
        <begin position="715"/>
        <end position="734"/>
    </location>
</feature>
<feature type="disulfide bond" evidence="1">
    <location>
        <begin position="736"/>
        <end position="749"/>
    </location>
</feature>
<feature type="cross-link" description="Glycyl lysine isopeptide (Lys-Gly) (interchain with G-Cter in ubiquitin)" evidence="2">
    <location>
        <position position="839"/>
    </location>
</feature>
<evidence type="ECO:0000250" key="1"/>
<evidence type="ECO:0000250" key="2">
    <source>
        <dbReference type="UniProtKB" id="P98155"/>
    </source>
</evidence>
<evidence type="ECO:0000250" key="3">
    <source>
        <dbReference type="UniProtKB" id="P98156"/>
    </source>
</evidence>
<evidence type="ECO:0000255" key="4"/>
<evidence type="ECO:0000255" key="5">
    <source>
        <dbReference type="PROSITE-ProRule" id="PRU00076"/>
    </source>
</evidence>
<evidence type="ECO:0000255" key="6">
    <source>
        <dbReference type="PROSITE-ProRule" id="PRU00124"/>
    </source>
</evidence>
<accession>P35953</accession>
<keyword id="KW-0153">Cholesterol metabolism</keyword>
<keyword id="KW-0168">Coated pit</keyword>
<keyword id="KW-1015">Disulfide bond</keyword>
<keyword id="KW-0245">EGF-like domain</keyword>
<keyword id="KW-0254">Endocytosis</keyword>
<keyword id="KW-0325">Glycoprotein</keyword>
<keyword id="KW-1017">Isopeptide bond</keyword>
<keyword id="KW-0443">Lipid metabolism</keyword>
<keyword id="KW-0445">Lipid transport</keyword>
<keyword id="KW-0472">Membrane</keyword>
<keyword id="KW-0675">Receptor</keyword>
<keyword id="KW-1185">Reference proteome</keyword>
<keyword id="KW-0677">Repeat</keyword>
<keyword id="KW-0732">Signal</keyword>
<keyword id="KW-0753">Steroid metabolism</keyword>
<keyword id="KW-1207">Sterol metabolism</keyword>
<keyword id="KW-0812">Transmembrane</keyword>
<keyword id="KW-1133">Transmembrane helix</keyword>
<keyword id="KW-0813">Transport</keyword>
<keyword id="KW-0832">Ubl conjugation</keyword>
<keyword id="KW-0850">VLDL</keyword>
<dbReference type="EMBL" id="D11100">
    <property type="protein sequence ID" value="BAA01874.1"/>
    <property type="molecule type" value="mRNA"/>
</dbReference>
<dbReference type="PIR" id="A46286">
    <property type="entry name" value="QRRBVD"/>
</dbReference>
<dbReference type="RefSeq" id="NP_001075657.1">
    <property type="nucleotide sequence ID" value="NM_001082188.1"/>
</dbReference>
<dbReference type="RefSeq" id="XP_008254086.1">
    <property type="nucleotide sequence ID" value="XM_008255864.4"/>
</dbReference>
<dbReference type="SMR" id="P35953"/>
<dbReference type="FunCoup" id="P35953">
    <property type="interactions" value="103"/>
</dbReference>
<dbReference type="STRING" id="9986.ENSOCUP00000001926"/>
<dbReference type="GlyCosmos" id="P35953">
    <property type="glycosylation" value="3 sites, No reported glycans"/>
</dbReference>
<dbReference type="PaxDb" id="9986-ENSOCUP00000001926"/>
<dbReference type="Ensembl" id="ENSOCUT00000002233.4">
    <property type="protein sequence ID" value="ENSOCUP00000001926.2"/>
    <property type="gene ID" value="ENSOCUG00000002231.4"/>
</dbReference>
<dbReference type="GeneID" id="100008976"/>
<dbReference type="KEGG" id="ocu:100008976"/>
<dbReference type="CTD" id="7436"/>
<dbReference type="eggNOG" id="KOG1215">
    <property type="taxonomic scope" value="Eukaryota"/>
</dbReference>
<dbReference type="GeneTree" id="ENSGT00940000155460"/>
<dbReference type="HOGENOM" id="CLU_008163_2_0_1"/>
<dbReference type="InParanoid" id="P35953"/>
<dbReference type="OMA" id="ADKRNCQ"/>
<dbReference type="OrthoDB" id="5958943at2759"/>
<dbReference type="TreeFam" id="TF351700"/>
<dbReference type="Proteomes" id="UP000001811">
    <property type="component" value="Chromosome 1"/>
</dbReference>
<dbReference type="Bgee" id="ENSOCUG00000002231">
    <property type="expression patterns" value="Expressed in heart and 17 other cell types or tissues"/>
</dbReference>
<dbReference type="GO" id="GO:0016324">
    <property type="term" value="C:apical plasma membrane"/>
    <property type="evidence" value="ECO:0007669"/>
    <property type="project" value="TreeGrafter"/>
</dbReference>
<dbReference type="GO" id="GO:0005905">
    <property type="term" value="C:clathrin-coated pit"/>
    <property type="evidence" value="ECO:0007669"/>
    <property type="project" value="UniProtKB-SubCell"/>
</dbReference>
<dbReference type="GO" id="GO:0098978">
    <property type="term" value="C:glutamatergic synapse"/>
    <property type="evidence" value="ECO:0007669"/>
    <property type="project" value="Ensembl"/>
</dbReference>
<dbReference type="GO" id="GO:0043235">
    <property type="term" value="C:receptor complex"/>
    <property type="evidence" value="ECO:0007669"/>
    <property type="project" value="Ensembl"/>
</dbReference>
<dbReference type="GO" id="GO:0034361">
    <property type="term" value="C:very-low-density lipoprotein particle"/>
    <property type="evidence" value="ECO:0007669"/>
    <property type="project" value="UniProtKB-KW"/>
</dbReference>
<dbReference type="GO" id="GO:0034185">
    <property type="term" value="F:apolipoprotein binding"/>
    <property type="evidence" value="ECO:0007669"/>
    <property type="project" value="Ensembl"/>
</dbReference>
<dbReference type="GO" id="GO:0005509">
    <property type="term" value="F:calcium ion binding"/>
    <property type="evidence" value="ECO:0007669"/>
    <property type="project" value="InterPro"/>
</dbReference>
<dbReference type="GO" id="GO:0048306">
    <property type="term" value="F:calcium-dependent protein binding"/>
    <property type="evidence" value="ECO:0007669"/>
    <property type="project" value="Ensembl"/>
</dbReference>
<dbReference type="GO" id="GO:0042562">
    <property type="term" value="F:hormone binding"/>
    <property type="evidence" value="ECO:0007669"/>
    <property type="project" value="TreeGrafter"/>
</dbReference>
<dbReference type="GO" id="GO:0038025">
    <property type="term" value="F:reelin receptor activity"/>
    <property type="evidence" value="ECO:0007669"/>
    <property type="project" value="Ensembl"/>
</dbReference>
<dbReference type="GO" id="GO:0034189">
    <property type="term" value="F:very-low-density lipoprotein particle binding"/>
    <property type="evidence" value="ECO:0007669"/>
    <property type="project" value="Ensembl"/>
</dbReference>
<dbReference type="GO" id="GO:0030229">
    <property type="term" value="F:very-low-density lipoprotein particle receptor activity"/>
    <property type="evidence" value="ECO:0007669"/>
    <property type="project" value="Ensembl"/>
</dbReference>
<dbReference type="GO" id="GO:0008203">
    <property type="term" value="P:cholesterol metabolic process"/>
    <property type="evidence" value="ECO:0007669"/>
    <property type="project" value="UniProtKB-KW"/>
</dbReference>
<dbReference type="GO" id="GO:0048813">
    <property type="term" value="P:dendrite morphogenesis"/>
    <property type="evidence" value="ECO:0007669"/>
    <property type="project" value="Ensembl"/>
</dbReference>
<dbReference type="GO" id="GO:0034436">
    <property type="term" value="P:glycoprotein transport"/>
    <property type="evidence" value="ECO:0007669"/>
    <property type="project" value="Ensembl"/>
</dbReference>
<dbReference type="GO" id="GO:0006869">
    <property type="term" value="P:lipid transport"/>
    <property type="evidence" value="ECO:0007669"/>
    <property type="project" value="UniProtKB-KW"/>
</dbReference>
<dbReference type="GO" id="GO:1900006">
    <property type="term" value="P:positive regulation of dendrite development"/>
    <property type="evidence" value="ECO:0007669"/>
    <property type="project" value="Ensembl"/>
</dbReference>
<dbReference type="GO" id="GO:0006898">
    <property type="term" value="P:receptor-mediated endocytosis"/>
    <property type="evidence" value="ECO:0007669"/>
    <property type="project" value="Ensembl"/>
</dbReference>
<dbReference type="GO" id="GO:0051963">
    <property type="term" value="P:regulation of synapse assembly"/>
    <property type="evidence" value="ECO:0007669"/>
    <property type="project" value="Ensembl"/>
</dbReference>
<dbReference type="GO" id="GO:0021517">
    <property type="term" value="P:ventral spinal cord development"/>
    <property type="evidence" value="ECO:0007669"/>
    <property type="project" value="Ensembl"/>
</dbReference>
<dbReference type="GO" id="GO:0034447">
    <property type="term" value="P:very-low-density lipoprotein particle clearance"/>
    <property type="evidence" value="ECO:0007669"/>
    <property type="project" value="Ensembl"/>
</dbReference>
<dbReference type="CDD" id="cd00054">
    <property type="entry name" value="EGF_CA"/>
    <property type="match status" value="1"/>
</dbReference>
<dbReference type="CDD" id="cd00112">
    <property type="entry name" value="LDLa"/>
    <property type="match status" value="8"/>
</dbReference>
<dbReference type="FunFam" id="2.10.25.10:FF:000009">
    <property type="entry name" value="Low-density lipoprotein receptor isoform 1"/>
    <property type="match status" value="1"/>
</dbReference>
<dbReference type="FunFam" id="2.10.25.10:FF:000052">
    <property type="entry name" value="low-density lipoprotein receptor isoform X1"/>
    <property type="match status" value="1"/>
</dbReference>
<dbReference type="FunFam" id="2.120.10.30:FF:000002">
    <property type="entry name" value="low-density lipoprotein receptor isoform X1"/>
    <property type="match status" value="1"/>
</dbReference>
<dbReference type="FunFam" id="4.10.400.10:FF:000025">
    <property type="entry name" value="Very low density lipoprotein receptor"/>
    <property type="match status" value="1"/>
</dbReference>
<dbReference type="FunFam" id="4.10.400.10:FF:000038">
    <property type="entry name" value="Very low density lipoprotein receptor"/>
    <property type="match status" value="1"/>
</dbReference>
<dbReference type="FunFam" id="4.10.400.10:FF:000043">
    <property type="entry name" value="Very low density lipoprotein receptor"/>
    <property type="match status" value="1"/>
</dbReference>
<dbReference type="FunFam" id="4.10.400.10:FF:000046">
    <property type="entry name" value="Very low density lipoprotein receptor"/>
    <property type="match status" value="1"/>
</dbReference>
<dbReference type="FunFam" id="4.10.400.10:FF:000049">
    <property type="entry name" value="Very low density lipoprotein receptor"/>
    <property type="match status" value="1"/>
</dbReference>
<dbReference type="FunFam" id="4.10.400.10:FF:000051">
    <property type="entry name" value="Very low density lipoprotein receptor"/>
    <property type="match status" value="1"/>
</dbReference>
<dbReference type="FunFam" id="4.10.400.10:FF:000053">
    <property type="entry name" value="Very low density lipoprotein receptor"/>
    <property type="match status" value="1"/>
</dbReference>
<dbReference type="FunFam" id="4.10.400.10:FF:000057">
    <property type="entry name" value="Very low density lipoprotein receptor"/>
    <property type="match status" value="1"/>
</dbReference>
<dbReference type="Gene3D" id="2.10.25.10">
    <property type="entry name" value="Laminin"/>
    <property type="match status" value="3"/>
</dbReference>
<dbReference type="Gene3D" id="4.10.400.10">
    <property type="entry name" value="Low-density Lipoprotein Receptor"/>
    <property type="match status" value="8"/>
</dbReference>
<dbReference type="Gene3D" id="2.120.10.30">
    <property type="entry name" value="TolB, C-terminal domain"/>
    <property type="match status" value="1"/>
</dbReference>
<dbReference type="InterPro" id="IPR011042">
    <property type="entry name" value="6-blade_b-propeller_TolB-like"/>
</dbReference>
<dbReference type="InterPro" id="IPR001881">
    <property type="entry name" value="EGF-like_Ca-bd_dom"/>
</dbReference>
<dbReference type="InterPro" id="IPR000742">
    <property type="entry name" value="EGF-like_dom"/>
</dbReference>
<dbReference type="InterPro" id="IPR000152">
    <property type="entry name" value="EGF-type_Asp/Asn_hydroxyl_site"/>
</dbReference>
<dbReference type="InterPro" id="IPR018097">
    <property type="entry name" value="EGF_Ca-bd_CS"/>
</dbReference>
<dbReference type="InterPro" id="IPR009030">
    <property type="entry name" value="Growth_fac_rcpt_cys_sf"/>
</dbReference>
<dbReference type="InterPro" id="IPR036055">
    <property type="entry name" value="LDL_receptor-like_sf"/>
</dbReference>
<dbReference type="InterPro" id="IPR051221">
    <property type="entry name" value="LDLR-related"/>
</dbReference>
<dbReference type="InterPro" id="IPR023415">
    <property type="entry name" value="LDLR_class-A_CS"/>
</dbReference>
<dbReference type="InterPro" id="IPR000033">
    <property type="entry name" value="LDLR_classB_rpt"/>
</dbReference>
<dbReference type="InterPro" id="IPR002172">
    <property type="entry name" value="LDrepeatLR_classA_rpt"/>
</dbReference>
<dbReference type="InterPro" id="IPR049883">
    <property type="entry name" value="NOTCH1_EGF-like"/>
</dbReference>
<dbReference type="PANTHER" id="PTHR22722:SF15">
    <property type="entry name" value="LOW-DENSITY LIPOPROTEIN RECEPTOR-RELATED"/>
    <property type="match status" value="1"/>
</dbReference>
<dbReference type="PANTHER" id="PTHR22722">
    <property type="entry name" value="LOW-DENSITY LIPOPROTEIN RECEPTOR-RELATED PROTEIN 2-RELATED"/>
    <property type="match status" value="1"/>
</dbReference>
<dbReference type="Pfam" id="PF07645">
    <property type="entry name" value="EGF_CA"/>
    <property type="match status" value="1"/>
</dbReference>
<dbReference type="Pfam" id="PF14670">
    <property type="entry name" value="FXa_inhibition"/>
    <property type="match status" value="2"/>
</dbReference>
<dbReference type="Pfam" id="PF00057">
    <property type="entry name" value="Ldl_recept_a"/>
    <property type="match status" value="8"/>
</dbReference>
<dbReference type="Pfam" id="PF00058">
    <property type="entry name" value="Ldl_recept_b"/>
    <property type="match status" value="5"/>
</dbReference>
<dbReference type="PRINTS" id="PR00261">
    <property type="entry name" value="LDLRECEPTOR"/>
</dbReference>
<dbReference type="SMART" id="SM00181">
    <property type="entry name" value="EGF"/>
    <property type="match status" value="6"/>
</dbReference>
<dbReference type="SMART" id="SM00179">
    <property type="entry name" value="EGF_CA"/>
    <property type="match status" value="2"/>
</dbReference>
<dbReference type="SMART" id="SM00192">
    <property type="entry name" value="LDLa"/>
    <property type="match status" value="8"/>
</dbReference>
<dbReference type="SMART" id="SM00135">
    <property type="entry name" value="LY"/>
    <property type="match status" value="5"/>
</dbReference>
<dbReference type="SUPFAM" id="SSF57184">
    <property type="entry name" value="Growth factor receptor domain"/>
    <property type="match status" value="1"/>
</dbReference>
<dbReference type="SUPFAM" id="SSF57424">
    <property type="entry name" value="LDL receptor-like module"/>
    <property type="match status" value="8"/>
</dbReference>
<dbReference type="SUPFAM" id="SSF63825">
    <property type="entry name" value="YWTD domain"/>
    <property type="match status" value="1"/>
</dbReference>
<dbReference type="PROSITE" id="PS00010">
    <property type="entry name" value="ASX_HYDROXYL"/>
    <property type="match status" value="2"/>
</dbReference>
<dbReference type="PROSITE" id="PS01186">
    <property type="entry name" value="EGF_2"/>
    <property type="match status" value="3"/>
</dbReference>
<dbReference type="PROSITE" id="PS50026">
    <property type="entry name" value="EGF_3"/>
    <property type="match status" value="2"/>
</dbReference>
<dbReference type="PROSITE" id="PS01187">
    <property type="entry name" value="EGF_CA"/>
    <property type="match status" value="1"/>
</dbReference>
<dbReference type="PROSITE" id="PS01209">
    <property type="entry name" value="LDLRA_1"/>
    <property type="match status" value="8"/>
</dbReference>
<dbReference type="PROSITE" id="PS50068">
    <property type="entry name" value="LDLRA_2"/>
    <property type="match status" value="8"/>
</dbReference>
<dbReference type="PROSITE" id="PS51120">
    <property type="entry name" value="LDLRB"/>
    <property type="match status" value="5"/>
</dbReference>
<comment type="function">
    <text evidence="2 3">Multifunctional cell surface receptor that binds VLDL and transports it into cells by endocytosis and therefore plays an important role in energy metabolism. Also binds to a wide range of other molecules including Reelin/RELN or apolipoprotein E/APOE-containing ligands as well as clusterin/CLU. In the off-state of the pathway, forms homooligomers or heterooligomers with LRP8. Upon binding to ligands, homooligomers are rearranged to higher order receptor clusters that transmit the extracellular RELN signal to intracellular signaling processes by binding to DAB1 (By similarity). This interaction results in phosphorylation of DAB1 leading to the ultimate cell responses required for the correct positioning of newly generated neurons. Later, mediates a stop signal for migrating neurons, preventing them from entering the marginal zone (By similarity).</text>
</comment>
<comment type="subunit">
    <text evidence="2 3">Homooligomer. Binds to the extracellular matrix protein Reelin/RELN. Interacts with LRP8 (By similarity). Interacts with LDLRAP1 (By similarity). Interacts with SNX17 (By similarity). Interacts with DAB1. Interacts with PCSK9. Interacts with PAFAH1B3 and PAFAH1B2, the catalytic complex of (PAF-AH (I)) heterotetrameric enzyme; these interactions may modulate the Reelin pathway. Interacts with STX5; this interaction mediates VLDLR translocation from the endoplasmic reticulum to the plasma membrane. Interacts with CLU (By similarity).</text>
</comment>
<comment type="subcellular location">
    <subcellularLocation>
        <location>Membrane</location>
        <topology>Single-pass type I membrane protein</topology>
    </subcellularLocation>
    <subcellularLocation>
        <location>Membrane</location>
        <location>Clathrin-coated pit</location>
        <topology>Single-pass type I membrane protein</topology>
    </subcellularLocation>
</comment>
<comment type="tissue specificity">
    <text>Abundant in heart, muscle, and adipose tissue.</text>
</comment>
<comment type="PTM">
    <text evidence="1">Ubiquitinated at Lys-839 by MYLIP leading to degradation.</text>
</comment>
<name>VLDLR_RABIT</name>
<protein>
    <recommendedName>
        <fullName>Very low-density lipoprotein receptor</fullName>
        <shortName>VLDL receptor</shortName>
        <shortName>VLDL-R</shortName>
    </recommendedName>
</protein>
<proteinExistence type="evidence at transcript level"/>
<reference key="1">
    <citation type="journal article" date="1992" name="Proc. Natl. Acad. Sci. U.S.A.">
        <title>Rabbit very low density lipoprotein receptor: a low density lipoprotein receptor-like protein with distinct ligand specificity.</title>
        <authorList>
            <person name="Takahashi S."/>
            <person name="Kawarabayasi Y."/>
            <person name="Nakai T."/>
            <person name="Sakai J."/>
            <person name="Yamamoto T."/>
        </authorList>
    </citation>
    <scope>NUCLEOTIDE SEQUENCE [MRNA]</scope>
    <scope>FUNCTION</scope>
</reference>